<sequence>MTTLTITRPDDWHVHLRDGEVLKDTVRDISRYNGRALIMPNTVPPVTNTEMALAYRDRILAEQHGEQFEPLMALYLTDNTTPDEIRKAKATGKIVAAKLYPAGATTNSDSGVTDAKNIYHVFEAMEEVGMLLLVHGEVTHNHVDIFDREKEFLDTVLAPIVNDFPNLKIVLEHITTSDAANFVNNASDNVAATITAHHLLFNRNHMLVGGIKPHFYCLPILKRNTHQQALIEAATSGSKKFFLGTDSAPHAKGAKESACGCAGSYTAHAALELYAEVFENEGKLENLEAFASLNGPDFYGIARNTDTVTLEKASWDVPETMPFGSDIVVPIRANEKIEWEVK</sequence>
<comment type="function">
    <text evidence="1">Catalyzes the reversible cyclization of carbamoyl aspartate to dihydroorotate.</text>
</comment>
<comment type="catalytic activity">
    <reaction evidence="1">
        <text>(S)-dihydroorotate + H2O = N-carbamoyl-L-aspartate + H(+)</text>
        <dbReference type="Rhea" id="RHEA:24296"/>
        <dbReference type="ChEBI" id="CHEBI:15377"/>
        <dbReference type="ChEBI" id="CHEBI:15378"/>
        <dbReference type="ChEBI" id="CHEBI:30864"/>
        <dbReference type="ChEBI" id="CHEBI:32814"/>
        <dbReference type="EC" id="3.5.2.3"/>
    </reaction>
</comment>
<comment type="cofactor">
    <cofactor evidence="1">
        <name>Zn(2+)</name>
        <dbReference type="ChEBI" id="CHEBI:29105"/>
    </cofactor>
    <text evidence="1">Binds 2 Zn(2+) ions per subunit.</text>
</comment>
<comment type="pathway">
    <text evidence="1">Pyrimidine metabolism; UMP biosynthesis via de novo pathway; (S)-dihydroorotate from bicarbonate: step 3/3.</text>
</comment>
<comment type="subunit">
    <text evidence="1">Homodimer.</text>
</comment>
<comment type="similarity">
    <text evidence="1">Belongs to the metallo-dependent hydrolases superfamily. DHOase family. Class II DHOase subfamily.</text>
</comment>
<dbReference type="EC" id="3.5.2.3" evidence="1"/>
<dbReference type="EMBL" id="CP000790">
    <property type="protein sequence ID" value="ABU73133.1"/>
    <property type="molecule type" value="Genomic_DNA"/>
</dbReference>
<dbReference type="RefSeq" id="WP_005529762.1">
    <property type="nucleotide sequence ID" value="NC_022270.1"/>
</dbReference>
<dbReference type="SMR" id="A7N655"/>
<dbReference type="KEGG" id="vha:VIBHAR_05227"/>
<dbReference type="PATRIC" id="fig|338187.25.peg.4995"/>
<dbReference type="UniPathway" id="UPA00070">
    <property type="reaction ID" value="UER00117"/>
</dbReference>
<dbReference type="Proteomes" id="UP000008152">
    <property type="component" value="Chromosome II"/>
</dbReference>
<dbReference type="GO" id="GO:0005829">
    <property type="term" value="C:cytosol"/>
    <property type="evidence" value="ECO:0007669"/>
    <property type="project" value="TreeGrafter"/>
</dbReference>
<dbReference type="GO" id="GO:0004151">
    <property type="term" value="F:dihydroorotase activity"/>
    <property type="evidence" value="ECO:0007669"/>
    <property type="project" value="UniProtKB-UniRule"/>
</dbReference>
<dbReference type="GO" id="GO:0008270">
    <property type="term" value="F:zinc ion binding"/>
    <property type="evidence" value="ECO:0007669"/>
    <property type="project" value="UniProtKB-UniRule"/>
</dbReference>
<dbReference type="GO" id="GO:0006207">
    <property type="term" value="P:'de novo' pyrimidine nucleobase biosynthetic process"/>
    <property type="evidence" value="ECO:0007669"/>
    <property type="project" value="TreeGrafter"/>
</dbReference>
<dbReference type="GO" id="GO:0044205">
    <property type="term" value="P:'de novo' UMP biosynthetic process"/>
    <property type="evidence" value="ECO:0007669"/>
    <property type="project" value="UniProtKB-UniRule"/>
</dbReference>
<dbReference type="CDD" id="cd01294">
    <property type="entry name" value="DHOase"/>
    <property type="match status" value="1"/>
</dbReference>
<dbReference type="FunFam" id="3.20.20.140:FF:000006">
    <property type="entry name" value="Dihydroorotase"/>
    <property type="match status" value="1"/>
</dbReference>
<dbReference type="Gene3D" id="3.20.20.140">
    <property type="entry name" value="Metal-dependent hydrolases"/>
    <property type="match status" value="1"/>
</dbReference>
<dbReference type="HAMAP" id="MF_00219">
    <property type="entry name" value="PyrC_classII"/>
    <property type="match status" value="1"/>
</dbReference>
<dbReference type="InterPro" id="IPR006680">
    <property type="entry name" value="Amidohydro-rel"/>
</dbReference>
<dbReference type="InterPro" id="IPR004721">
    <property type="entry name" value="DHOdimr"/>
</dbReference>
<dbReference type="InterPro" id="IPR002195">
    <property type="entry name" value="Dihydroorotase_CS"/>
</dbReference>
<dbReference type="InterPro" id="IPR032466">
    <property type="entry name" value="Metal_Hydrolase"/>
</dbReference>
<dbReference type="NCBIfam" id="TIGR00856">
    <property type="entry name" value="pyrC_dimer"/>
    <property type="match status" value="1"/>
</dbReference>
<dbReference type="PANTHER" id="PTHR43137">
    <property type="entry name" value="DIHYDROOROTASE"/>
    <property type="match status" value="1"/>
</dbReference>
<dbReference type="PANTHER" id="PTHR43137:SF1">
    <property type="entry name" value="DIHYDROOROTASE"/>
    <property type="match status" value="1"/>
</dbReference>
<dbReference type="Pfam" id="PF01979">
    <property type="entry name" value="Amidohydro_1"/>
    <property type="match status" value="1"/>
</dbReference>
<dbReference type="PIRSF" id="PIRSF001237">
    <property type="entry name" value="DHOdimr"/>
    <property type="match status" value="1"/>
</dbReference>
<dbReference type="SUPFAM" id="SSF51556">
    <property type="entry name" value="Metallo-dependent hydrolases"/>
    <property type="match status" value="1"/>
</dbReference>
<dbReference type="PROSITE" id="PS00482">
    <property type="entry name" value="DIHYDROOROTASE_1"/>
    <property type="match status" value="1"/>
</dbReference>
<dbReference type="PROSITE" id="PS00483">
    <property type="entry name" value="DIHYDROOROTASE_2"/>
    <property type="match status" value="1"/>
</dbReference>
<reference key="1">
    <citation type="submission" date="2007-08" db="EMBL/GenBank/DDBJ databases">
        <authorList>
            <consortium name="The Vibrio harveyi Genome Sequencing Project"/>
            <person name="Bassler B."/>
            <person name="Clifton S.W."/>
            <person name="Fulton L."/>
            <person name="Delehaunty K."/>
            <person name="Fronick C."/>
            <person name="Harrison M."/>
            <person name="Markivic C."/>
            <person name="Fulton R."/>
            <person name="Tin-Wollam A.-M."/>
            <person name="Shah N."/>
            <person name="Pepin K."/>
            <person name="Nash W."/>
            <person name="Thiruvilangam P."/>
            <person name="Bhonagiri V."/>
            <person name="Waters C."/>
            <person name="Tu K.C."/>
            <person name="Irgon J."/>
            <person name="Wilson R.K."/>
        </authorList>
    </citation>
    <scope>NUCLEOTIDE SEQUENCE [LARGE SCALE GENOMIC DNA]</scope>
    <source>
        <strain>ATCC BAA-1116 / BB120</strain>
    </source>
</reference>
<name>PYRC_VIBC1</name>
<feature type="chain" id="PRO_1000024072" description="Dihydroorotase">
    <location>
        <begin position="1"/>
        <end position="342"/>
    </location>
</feature>
<feature type="active site" evidence="1">
    <location>
        <position position="246"/>
    </location>
</feature>
<feature type="binding site" evidence="1">
    <location>
        <position position="13"/>
    </location>
    <ligand>
        <name>Zn(2+)</name>
        <dbReference type="ChEBI" id="CHEBI:29105"/>
        <label>1</label>
    </ligand>
</feature>
<feature type="binding site" evidence="1">
    <location>
        <begin position="15"/>
        <end position="17"/>
    </location>
    <ligand>
        <name>substrate</name>
    </ligand>
</feature>
<feature type="binding site" evidence="1">
    <location>
        <position position="15"/>
    </location>
    <ligand>
        <name>Zn(2+)</name>
        <dbReference type="ChEBI" id="CHEBI:29105"/>
        <label>1</label>
    </ligand>
</feature>
<feature type="binding site" evidence="1">
    <location>
        <position position="41"/>
    </location>
    <ligand>
        <name>substrate</name>
    </ligand>
</feature>
<feature type="binding site" description="via carbamate group" evidence="1">
    <location>
        <position position="98"/>
    </location>
    <ligand>
        <name>Zn(2+)</name>
        <dbReference type="ChEBI" id="CHEBI:29105"/>
        <label>1</label>
    </ligand>
</feature>
<feature type="binding site" description="via carbamate group" evidence="1">
    <location>
        <position position="98"/>
    </location>
    <ligand>
        <name>Zn(2+)</name>
        <dbReference type="ChEBI" id="CHEBI:29105"/>
        <label>2</label>
    </ligand>
</feature>
<feature type="binding site" evidence="1">
    <location>
        <position position="135"/>
    </location>
    <ligand>
        <name>substrate</name>
    </ligand>
</feature>
<feature type="binding site" evidence="1">
    <location>
        <position position="135"/>
    </location>
    <ligand>
        <name>Zn(2+)</name>
        <dbReference type="ChEBI" id="CHEBI:29105"/>
        <label>2</label>
    </ligand>
</feature>
<feature type="binding site" evidence="1">
    <location>
        <position position="173"/>
    </location>
    <ligand>
        <name>Zn(2+)</name>
        <dbReference type="ChEBI" id="CHEBI:29105"/>
        <label>2</label>
    </ligand>
</feature>
<feature type="binding site" evidence="1">
    <location>
        <position position="218"/>
    </location>
    <ligand>
        <name>substrate</name>
    </ligand>
</feature>
<feature type="binding site" evidence="1">
    <location>
        <position position="246"/>
    </location>
    <ligand>
        <name>Zn(2+)</name>
        <dbReference type="ChEBI" id="CHEBI:29105"/>
        <label>1</label>
    </ligand>
</feature>
<feature type="binding site" evidence="1">
    <location>
        <position position="250"/>
    </location>
    <ligand>
        <name>substrate</name>
    </ligand>
</feature>
<feature type="binding site" evidence="1">
    <location>
        <position position="262"/>
    </location>
    <ligand>
        <name>substrate</name>
    </ligand>
</feature>
<feature type="modified residue" description="N6-carboxylysine" evidence="1">
    <location>
        <position position="98"/>
    </location>
</feature>
<evidence type="ECO:0000255" key="1">
    <source>
        <dbReference type="HAMAP-Rule" id="MF_00219"/>
    </source>
</evidence>
<organism>
    <name type="scientific">Vibrio campbellii (strain ATCC BAA-1116)</name>
    <dbReference type="NCBI Taxonomy" id="2902295"/>
    <lineage>
        <taxon>Bacteria</taxon>
        <taxon>Pseudomonadati</taxon>
        <taxon>Pseudomonadota</taxon>
        <taxon>Gammaproteobacteria</taxon>
        <taxon>Vibrionales</taxon>
        <taxon>Vibrionaceae</taxon>
        <taxon>Vibrio</taxon>
    </lineage>
</organism>
<proteinExistence type="inferred from homology"/>
<accession>A7N655</accession>
<keyword id="KW-0378">Hydrolase</keyword>
<keyword id="KW-0479">Metal-binding</keyword>
<keyword id="KW-0665">Pyrimidine biosynthesis</keyword>
<keyword id="KW-0862">Zinc</keyword>
<gene>
    <name evidence="1" type="primary">pyrC</name>
    <name type="ordered locus">VIBHAR_05227</name>
</gene>
<protein>
    <recommendedName>
        <fullName evidence="1">Dihydroorotase</fullName>
        <shortName evidence="1">DHOase</shortName>
        <ecNumber evidence="1">3.5.2.3</ecNumber>
    </recommendedName>
</protein>